<name>RUVB_MYCSS</name>
<organism>
    <name type="scientific">Mycobacterium sp. (strain MCS)</name>
    <dbReference type="NCBI Taxonomy" id="164756"/>
    <lineage>
        <taxon>Bacteria</taxon>
        <taxon>Bacillati</taxon>
        <taxon>Actinomycetota</taxon>
        <taxon>Actinomycetes</taxon>
        <taxon>Mycobacteriales</taxon>
        <taxon>Mycobacteriaceae</taxon>
        <taxon>Mycobacterium</taxon>
    </lineage>
</organism>
<proteinExistence type="inferred from homology"/>
<evidence type="ECO:0000255" key="1">
    <source>
        <dbReference type="HAMAP-Rule" id="MF_00016"/>
    </source>
</evidence>
<evidence type="ECO:0000256" key="2">
    <source>
        <dbReference type="SAM" id="MobiDB-lite"/>
    </source>
</evidence>
<gene>
    <name evidence="1" type="primary">ruvB</name>
    <name type="ordered locus">Mmcs_2267</name>
</gene>
<comment type="function">
    <text evidence="1">The RuvA-RuvB-RuvC complex processes Holliday junction (HJ) DNA during genetic recombination and DNA repair, while the RuvA-RuvB complex plays an important role in the rescue of blocked DNA replication forks via replication fork reversal (RFR). RuvA specifically binds to HJ cruciform DNA, conferring on it an open structure. The RuvB hexamer acts as an ATP-dependent pump, pulling dsDNA into and through the RuvAB complex. RuvB forms 2 homohexamers on either side of HJ DNA bound by 1 or 2 RuvA tetramers; 4 subunits per hexamer contact DNA at a time. Coordinated motions by a converter formed by DNA-disengaged RuvB subunits stimulates ATP hydrolysis and nucleotide exchange. Immobilization of the converter enables RuvB to convert the ATP-contained energy into a lever motion, pulling 2 nucleotides of DNA out of the RuvA tetramer per ATP hydrolyzed, thus driving DNA branch migration. The RuvB motors rotate together with the DNA substrate, which together with the progressing nucleotide cycle form the mechanistic basis for DNA recombination by continuous HJ branch migration. Branch migration allows RuvC to scan DNA until it finds its consensus sequence, where it cleaves and resolves cruciform DNA.</text>
</comment>
<comment type="catalytic activity">
    <reaction evidence="1">
        <text>ATP + H2O = ADP + phosphate + H(+)</text>
        <dbReference type="Rhea" id="RHEA:13065"/>
        <dbReference type="ChEBI" id="CHEBI:15377"/>
        <dbReference type="ChEBI" id="CHEBI:15378"/>
        <dbReference type="ChEBI" id="CHEBI:30616"/>
        <dbReference type="ChEBI" id="CHEBI:43474"/>
        <dbReference type="ChEBI" id="CHEBI:456216"/>
    </reaction>
</comment>
<comment type="subunit">
    <text evidence="1">Homohexamer. Forms an RuvA(8)-RuvB(12)-Holliday junction (HJ) complex. HJ DNA is sandwiched between 2 RuvA tetramers; dsDNA enters through RuvA and exits via RuvB. An RuvB hexamer assembles on each DNA strand where it exits the tetramer. Each RuvB hexamer is contacted by two RuvA subunits (via domain III) on 2 adjacent RuvB subunits; this complex drives branch migration. In the full resolvosome a probable DNA-RuvA(4)-RuvB(12)-RuvC(2) complex forms which resolves the HJ.</text>
</comment>
<comment type="subcellular location">
    <subcellularLocation>
        <location evidence="1">Cytoplasm</location>
    </subcellularLocation>
</comment>
<comment type="domain">
    <text evidence="1">Has 3 domains, the large (RuvB-L) and small ATPase (RuvB-S) domains and the C-terminal head (RuvB-H) domain. The head domain binds DNA, while the ATPase domains jointly bind ATP, ADP or are empty depending on the state of the subunit in the translocation cycle. During a single DNA translocation step the structure of each domain remains the same, but their relative positions change.</text>
</comment>
<comment type="similarity">
    <text evidence="1">Belongs to the RuvB family.</text>
</comment>
<feature type="chain" id="PRO_0000322818" description="Holliday junction branch migration complex subunit RuvB">
    <location>
        <begin position="1"/>
        <end position="357"/>
    </location>
</feature>
<feature type="region of interest" description="Large ATPase domain (RuvB-L)" evidence="1">
    <location>
        <begin position="1"/>
        <end position="195"/>
    </location>
</feature>
<feature type="region of interest" description="Disordered" evidence="2">
    <location>
        <begin position="1"/>
        <end position="27"/>
    </location>
</feature>
<feature type="region of interest" description="Small ATPAse domain (RuvB-S)" evidence="1">
    <location>
        <begin position="196"/>
        <end position="266"/>
    </location>
</feature>
<feature type="region of interest" description="Head domain (RuvB-H)" evidence="1">
    <location>
        <begin position="269"/>
        <end position="357"/>
    </location>
</feature>
<feature type="binding site" evidence="1">
    <location>
        <position position="34"/>
    </location>
    <ligand>
        <name>ATP</name>
        <dbReference type="ChEBI" id="CHEBI:30616"/>
    </ligand>
</feature>
<feature type="binding site" evidence="1">
    <location>
        <position position="35"/>
    </location>
    <ligand>
        <name>ATP</name>
        <dbReference type="ChEBI" id="CHEBI:30616"/>
    </ligand>
</feature>
<feature type="binding site" evidence="1">
    <location>
        <position position="76"/>
    </location>
    <ligand>
        <name>ATP</name>
        <dbReference type="ChEBI" id="CHEBI:30616"/>
    </ligand>
</feature>
<feature type="binding site" evidence="1">
    <location>
        <position position="79"/>
    </location>
    <ligand>
        <name>ATP</name>
        <dbReference type="ChEBI" id="CHEBI:30616"/>
    </ligand>
</feature>
<feature type="binding site" evidence="1">
    <location>
        <position position="80"/>
    </location>
    <ligand>
        <name>ATP</name>
        <dbReference type="ChEBI" id="CHEBI:30616"/>
    </ligand>
</feature>
<feature type="binding site" evidence="1">
    <location>
        <position position="80"/>
    </location>
    <ligand>
        <name>Mg(2+)</name>
        <dbReference type="ChEBI" id="CHEBI:18420"/>
    </ligand>
</feature>
<feature type="binding site" evidence="1">
    <location>
        <position position="81"/>
    </location>
    <ligand>
        <name>ATP</name>
        <dbReference type="ChEBI" id="CHEBI:30616"/>
    </ligand>
</feature>
<feature type="binding site" evidence="1">
    <location>
        <begin position="142"/>
        <end position="144"/>
    </location>
    <ligand>
        <name>ATP</name>
        <dbReference type="ChEBI" id="CHEBI:30616"/>
    </ligand>
</feature>
<feature type="binding site" evidence="1">
    <location>
        <position position="185"/>
    </location>
    <ligand>
        <name>ATP</name>
        <dbReference type="ChEBI" id="CHEBI:30616"/>
    </ligand>
</feature>
<feature type="binding site" evidence="1">
    <location>
        <position position="195"/>
    </location>
    <ligand>
        <name>ATP</name>
        <dbReference type="ChEBI" id="CHEBI:30616"/>
    </ligand>
</feature>
<feature type="binding site" evidence="1">
    <location>
        <position position="232"/>
    </location>
    <ligand>
        <name>ATP</name>
        <dbReference type="ChEBI" id="CHEBI:30616"/>
    </ligand>
</feature>
<feature type="binding site" evidence="1">
    <location>
        <position position="324"/>
    </location>
    <ligand>
        <name>DNA</name>
        <dbReference type="ChEBI" id="CHEBI:16991"/>
    </ligand>
</feature>
<feature type="binding site" evidence="1">
    <location>
        <position position="329"/>
    </location>
    <ligand>
        <name>DNA</name>
        <dbReference type="ChEBI" id="CHEBI:16991"/>
    </ligand>
</feature>
<protein>
    <recommendedName>
        <fullName evidence="1">Holliday junction branch migration complex subunit RuvB</fullName>
        <ecNumber evidence="1">3.6.4.-</ecNumber>
    </recommendedName>
</protein>
<sequence length="357" mass="37803">MGRFDDAGAQDAEPDDRDVSPALTVGEGDIDASLRPRSLGEFIGQPRVREQLQLVLEGAKNRGGTPDHILLSGPPGLGKTSLAMIIAAELSSSLRVTSGPALERAGDLAAMLSNLVEGDVLFIDEIHRIARPAEEMLYLAMEDFRVDVVVGKGPGATSIPLEVAPFTLVGATTRSGALTGPLRDRFGFTAHMDFYEPAELERVLARSAGILGIHLGTEAGAEIARRSRGTPRIANRLLRRVRDYAEVRADGVITRDIAKAALEVYDVDELGLDRLDRAVLSALIRSFGGGPVGVSTLAVAVGEEPTTVEEVCEPFLVRAGMIARTPRGRVATASAWTHLGLTPPSGITGLGQTGLFD</sequence>
<accession>Q1B9Q9</accession>
<keyword id="KW-0067">ATP-binding</keyword>
<keyword id="KW-0963">Cytoplasm</keyword>
<keyword id="KW-0227">DNA damage</keyword>
<keyword id="KW-0233">DNA recombination</keyword>
<keyword id="KW-0234">DNA repair</keyword>
<keyword id="KW-0238">DNA-binding</keyword>
<keyword id="KW-0378">Hydrolase</keyword>
<keyword id="KW-0547">Nucleotide-binding</keyword>
<dbReference type="EC" id="3.6.4.-" evidence="1"/>
<dbReference type="EMBL" id="CP000384">
    <property type="protein sequence ID" value="ABG08375.1"/>
    <property type="molecule type" value="Genomic_DNA"/>
</dbReference>
<dbReference type="SMR" id="Q1B9Q9"/>
<dbReference type="KEGG" id="mmc:Mmcs_2267"/>
<dbReference type="HOGENOM" id="CLU_055599_1_0_11"/>
<dbReference type="BioCyc" id="MSP164756:G1G6O-2319-MONOMER"/>
<dbReference type="GO" id="GO:0005737">
    <property type="term" value="C:cytoplasm"/>
    <property type="evidence" value="ECO:0007669"/>
    <property type="project" value="UniProtKB-SubCell"/>
</dbReference>
<dbReference type="GO" id="GO:0048476">
    <property type="term" value="C:Holliday junction resolvase complex"/>
    <property type="evidence" value="ECO:0007669"/>
    <property type="project" value="UniProtKB-UniRule"/>
</dbReference>
<dbReference type="GO" id="GO:0005524">
    <property type="term" value="F:ATP binding"/>
    <property type="evidence" value="ECO:0007669"/>
    <property type="project" value="UniProtKB-UniRule"/>
</dbReference>
<dbReference type="GO" id="GO:0016887">
    <property type="term" value="F:ATP hydrolysis activity"/>
    <property type="evidence" value="ECO:0007669"/>
    <property type="project" value="InterPro"/>
</dbReference>
<dbReference type="GO" id="GO:0000400">
    <property type="term" value="F:four-way junction DNA binding"/>
    <property type="evidence" value="ECO:0007669"/>
    <property type="project" value="UniProtKB-UniRule"/>
</dbReference>
<dbReference type="GO" id="GO:0009378">
    <property type="term" value="F:four-way junction helicase activity"/>
    <property type="evidence" value="ECO:0007669"/>
    <property type="project" value="InterPro"/>
</dbReference>
<dbReference type="GO" id="GO:0006310">
    <property type="term" value="P:DNA recombination"/>
    <property type="evidence" value="ECO:0007669"/>
    <property type="project" value="UniProtKB-UniRule"/>
</dbReference>
<dbReference type="GO" id="GO:0006281">
    <property type="term" value="P:DNA repair"/>
    <property type="evidence" value="ECO:0007669"/>
    <property type="project" value="UniProtKB-UniRule"/>
</dbReference>
<dbReference type="CDD" id="cd00009">
    <property type="entry name" value="AAA"/>
    <property type="match status" value="1"/>
</dbReference>
<dbReference type="Gene3D" id="1.10.8.60">
    <property type="match status" value="1"/>
</dbReference>
<dbReference type="Gene3D" id="3.40.50.300">
    <property type="entry name" value="P-loop containing nucleotide triphosphate hydrolases"/>
    <property type="match status" value="1"/>
</dbReference>
<dbReference type="Gene3D" id="1.10.10.10">
    <property type="entry name" value="Winged helix-like DNA-binding domain superfamily/Winged helix DNA-binding domain"/>
    <property type="match status" value="1"/>
</dbReference>
<dbReference type="HAMAP" id="MF_00016">
    <property type="entry name" value="DNA_HJ_migration_RuvB"/>
    <property type="match status" value="1"/>
</dbReference>
<dbReference type="InterPro" id="IPR003593">
    <property type="entry name" value="AAA+_ATPase"/>
</dbReference>
<dbReference type="InterPro" id="IPR041445">
    <property type="entry name" value="AAA_lid_4"/>
</dbReference>
<dbReference type="InterPro" id="IPR004605">
    <property type="entry name" value="DNA_helicase_Holl-junc_RuvB"/>
</dbReference>
<dbReference type="InterPro" id="IPR027417">
    <property type="entry name" value="P-loop_NTPase"/>
</dbReference>
<dbReference type="InterPro" id="IPR008824">
    <property type="entry name" value="RuvB-like_N"/>
</dbReference>
<dbReference type="InterPro" id="IPR008823">
    <property type="entry name" value="RuvB_C"/>
</dbReference>
<dbReference type="InterPro" id="IPR036388">
    <property type="entry name" value="WH-like_DNA-bd_sf"/>
</dbReference>
<dbReference type="InterPro" id="IPR036390">
    <property type="entry name" value="WH_DNA-bd_sf"/>
</dbReference>
<dbReference type="NCBIfam" id="NF000868">
    <property type="entry name" value="PRK00080.1"/>
    <property type="match status" value="1"/>
</dbReference>
<dbReference type="NCBIfam" id="TIGR00635">
    <property type="entry name" value="ruvB"/>
    <property type="match status" value="1"/>
</dbReference>
<dbReference type="PANTHER" id="PTHR42848">
    <property type="match status" value="1"/>
</dbReference>
<dbReference type="PANTHER" id="PTHR42848:SF1">
    <property type="entry name" value="HOLLIDAY JUNCTION BRANCH MIGRATION COMPLEX SUBUNIT RUVB"/>
    <property type="match status" value="1"/>
</dbReference>
<dbReference type="Pfam" id="PF17864">
    <property type="entry name" value="AAA_lid_4"/>
    <property type="match status" value="1"/>
</dbReference>
<dbReference type="Pfam" id="PF05491">
    <property type="entry name" value="RuvB_C"/>
    <property type="match status" value="1"/>
</dbReference>
<dbReference type="Pfam" id="PF05496">
    <property type="entry name" value="RuvB_N"/>
    <property type="match status" value="1"/>
</dbReference>
<dbReference type="SMART" id="SM00382">
    <property type="entry name" value="AAA"/>
    <property type="match status" value="1"/>
</dbReference>
<dbReference type="SUPFAM" id="SSF52540">
    <property type="entry name" value="P-loop containing nucleoside triphosphate hydrolases"/>
    <property type="match status" value="1"/>
</dbReference>
<dbReference type="SUPFAM" id="SSF46785">
    <property type="entry name" value="Winged helix' DNA-binding domain"/>
    <property type="match status" value="1"/>
</dbReference>
<reference key="1">
    <citation type="submission" date="2006-06" db="EMBL/GenBank/DDBJ databases">
        <title>Complete sequence of chromosome of Mycobacterium sp. MCS.</title>
        <authorList>
            <consortium name="US DOE Joint Genome Institute"/>
            <person name="Copeland A."/>
            <person name="Lucas S."/>
            <person name="Lapidus A."/>
            <person name="Barry K."/>
            <person name="Detter J.C."/>
            <person name="Glavina del Rio T."/>
            <person name="Hammon N."/>
            <person name="Israni S."/>
            <person name="Dalin E."/>
            <person name="Tice H."/>
            <person name="Pitluck S."/>
            <person name="Martinez M."/>
            <person name="Schmutz J."/>
            <person name="Larimer F."/>
            <person name="Land M."/>
            <person name="Hauser L."/>
            <person name="Kyrpides N."/>
            <person name="Kim E."/>
            <person name="Miller C.D."/>
            <person name="Hughes J.E."/>
            <person name="Anderson A.J."/>
            <person name="Sims R.C."/>
            <person name="Richardson P."/>
        </authorList>
    </citation>
    <scope>NUCLEOTIDE SEQUENCE [LARGE SCALE GENOMIC DNA]</scope>
    <source>
        <strain>MCS</strain>
    </source>
</reference>